<organism>
    <name type="scientific">Salmonella typhimurium (strain LT2 / SGSC1412 / ATCC 700720)</name>
    <dbReference type="NCBI Taxonomy" id="99287"/>
    <lineage>
        <taxon>Bacteria</taxon>
        <taxon>Pseudomonadati</taxon>
        <taxon>Pseudomonadota</taxon>
        <taxon>Gammaproteobacteria</taxon>
        <taxon>Enterobacterales</taxon>
        <taxon>Enterobacteriaceae</taxon>
        <taxon>Salmonella</taxon>
    </lineage>
</organism>
<keyword id="KW-0067">ATP-binding</keyword>
<keyword id="KW-0997">Cell inner membrane</keyword>
<keyword id="KW-1003">Cell membrane</keyword>
<keyword id="KW-0406">Ion transport</keyword>
<keyword id="KW-0472">Membrane</keyword>
<keyword id="KW-0547">Nucleotide-binding</keyword>
<keyword id="KW-0630">Potassium</keyword>
<keyword id="KW-0633">Potassium transport</keyword>
<keyword id="KW-1185">Reference proteome</keyword>
<keyword id="KW-0812">Transmembrane</keyword>
<keyword id="KW-1133">Transmembrane helix</keyword>
<keyword id="KW-0813">Transport</keyword>
<accession>Q8ZQW3</accession>
<protein>
    <recommendedName>
        <fullName evidence="1">Potassium-transporting ATPase KdpC subunit</fullName>
    </recommendedName>
    <alternativeName>
        <fullName evidence="1">ATP phosphohydrolase [potassium-transporting] C chain</fullName>
    </alternativeName>
    <alternativeName>
        <fullName evidence="1">Potassium-binding and translocating subunit C</fullName>
    </alternativeName>
    <alternativeName>
        <fullName evidence="1">Potassium-translocating ATPase C chain</fullName>
    </alternativeName>
</protein>
<gene>
    <name evidence="1" type="primary">kdpC</name>
    <name type="ordered locus">STM0704</name>
</gene>
<comment type="function">
    <text evidence="1">Part of the high-affinity ATP-driven potassium transport (or Kdp) system, which catalyzes the hydrolysis of ATP coupled with the electrogenic transport of potassium into the cytoplasm. This subunit acts as a catalytic chaperone that increases the ATP-binding affinity of the ATP-hydrolyzing subunit KdpB by the formation of a transient KdpB/KdpC/ATP ternary complex.</text>
</comment>
<comment type="subunit">
    <text evidence="1">The system is composed of three essential subunits: KdpA, KdpB and KdpC.</text>
</comment>
<comment type="subcellular location">
    <subcellularLocation>
        <location evidence="1">Cell inner membrane</location>
        <topology evidence="1">Single-pass membrane protein</topology>
    </subcellularLocation>
</comment>
<comment type="similarity">
    <text evidence="1">Belongs to the KdpC family.</text>
</comment>
<name>KDPC_SALTY</name>
<evidence type="ECO:0000255" key="1">
    <source>
        <dbReference type="HAMAP-Rule" id="MF_00276"/>
    </source>
</evidence>
<dbReference type="EMBL" id="AE006468">
    <property type="protein sequence ID" value="AAL19648.1"/>
    <property type="molecule type" value="Genomic_DNA"/>
</dbReference>
<dbReference type="RefSeq" id="NP_459689.1">
    <property type="nucleotide sequence ID" value="NC_003197.2"/>
</dbReference>
<dbReference type="RefSeq" id="WP_000579804.1">
    <property type="nucleotide sequence ID" value="NC_003197.2"/>
</dbReference>
<dbReference type="SMR" id="Q8ZQW3"/>
<dbReference type="STRING" id="99287.STM0704"/>
<dbReference type="PaxDb" id="99287-STM0704"/>
<dbReference type="GeneID" id="1252224"/>
<dbReference type="KEGG" id="stm:STM0704"/>
<dbReference type="PATRIC" id="fig|99287.12.peg.737"/>
<dbReference type="HOGENOM" id="CLU_077094_2_0_6"/>
<dbReference type="OMA" id="KYFWPRP"/>
<dbReference type="PhylomeDB" id="Q8ZQW3"/>
<dbReference type="BioCyc" id="SENT99287:STM0704-MONOMER"/>
<dbReference type="Proteomes" id="UP000001014">
    <property type="component" value="Chromosome"/>
</dbReference>
<dbReference type="GO" id="GO:0005886">
    <property type="term" value="C:plasma membrane"/>
    <property type="evidence" value="ECO:0007669"/>
    <property type="project" value="UniProtKB-SubCell"/>
</dbReference>
<dbReference type="GO" id="GO:0005524">
    <property type="term" value="F:ATP binding"/>
    <property type="evidence" value="ECO:0007669"/>
    <property type="project" value="UniProtKB-UniRule"/>
</dbReference>
<dbReference type="GO" id="GO:0008556">
    <property type="term" value="F:P-type potassium transmembrane transporter activity"/>
    <property type="evidence" value="ECO:0000318"/>
    <property type="project" value="GO_Central"/>
</dbReference>
<dbReference type="GO" id="GO:0071805">
    <property type="term" value="P:potassium ion transmembrane transport"/>
    <property type="evidence" value="ECO:0000318"/>
    <property type="project" value="GO_Central"/>
</dbReference>
<dbReference type="HAMAP" id="MF_00276">
    <property type="entry name" value="KdpC"/>
    <property type="match status" value="1"/>
</dbReference>
<dbReference type="InterPro" id="IPR003820">
    <property type="entry name" value="KdpC"/>
</dbReference>
<dbReference type="NCBIfam" id="TIGR00681">
    <property type="entry name" value="kdpC"/>
    <property type="match status" value="1"/>
</dbReference>
<dbReference type="NCBIfam" id="NF001454">
    <property type="entry name" value="PRK00315.1"/>
    <property type="match status" value="1"/>
</dbReference>
<dbReference type="PANTHER" id="PTHR30042">
    <property type="entry name" value="POTASSIUM-TRANSPORTING ATPASE C CHAIN"/>
    <property type="match status" value="1"/>
</dbReference>
<dbReference type="PANTHER" id="PTHR30042:SF2">
    <property type="entry name" value="POTASSIUM-TRANSPORTING ATPASE KDPC SUBUNIT"/>
    <property type="match status" value="1"/>
</dbReference>
<dbReference type="Pfam" id="PF02669">
    <property type="entry name" value="KdpC"/>
    <property type="match status" value="1"/>
</dbReference>
<dbReference type="PIRSF" id="PIRSF001296">
    <property type="entry name" value="K_ATPase_KdpC"/>
    <property type="match status" value="1"/>
</dbReference>
<reference key="1">
    <citation type="journal article" date="2001" name="Nature">
        <title>Complete genome sequence of Salmonella enterica serovar Typhimurium LT2.</title>
        <authorList>
            <person name="McClelland M."/>
            <person name="Sanderson K.E."/>
            <person name="Spieth J."/>
            <person name="Clifton S.W."/>
            <person name="Latreille P."/>
            <person name="Courtney L."/>
            <person name="Porwollik S."/>
            <person name="Ali J."/>
            <person name="Dante M."/>
            <person name="Du F."/>
            <person name="Hou S."/>
            <person name="Layman D."/>
            <person name="Leonard S."/>
            <person name="Nguyen C."/>
            <person name="Scott K."/>
            <person name="Holmes A."/>
            <person name="Grewal N."/>
            <person name="Mulvaney E."/>
            <person name="Ryan E."/>
            <person name="Sun H."/>
            <person name="Florea L."/>
            <person name="Miller W."/>
            <person name="Stoneking T."/>
            <person name="Nhan M."/>
            <person name="Waterston R."/>
            <person name="Wilson R.K."/>
        </authorList>
    </citation>
    <scope>NUCLEOTIDE SEQUENCE [LARGE SCALE GENOMIC DNA]</scope>
    <source>
        <strain>LT2 / SGSC1412 / ATCC 700720</strain>
    </source>
</reference>
<proteinExistence type="inferred from homology"/>
<feature type="chain" id="PRO_0000197008" description="Potassium-transporting ATPase KdpC subunit">
    <location>
        <begin position="1"/>
        <end position="194"/>
    </location>
</feature>
<feature type="transmembrane region" description="Helical" evidence="1">
    <location>
        <begin position="12"/>
        <end position="34"/>
    </location>
</feature>
<sequence>MIGLRPAFSTMLFLLLLTGGVYPLLTTALGQWWFPWQANGSLIHKDNVIRGSALIGQSFTAAGYFHGRPSATADTPYNPLASGGSNLAASNPELDAQIQARVAALRAANPQASSAVPVELATASASGLDNNLTPGAAAWQIPRVAAARQLPVEQVAQLVAEYTHRPLARFLGQPVVNIVELNLALDALQGHRAK</sequence>